<dbReference type="EMBL" id="CP001144">
    <property type="protein sequence ID" value="ACH74548.1"/>
    <property type="molecule type" value="Genomic_DNA"/>
</dbReference>
<dbReference type="RefSeq" id="WP_001005805.1">
    <property type="nucleotide sequence ID" value="NC_011205.1"/>
</dbReference>
<dbReference type="SMR" id="B5FTQ5"/>
<dbReference type="KEGG" id="sed:SeD_A3218"/>
<dbReference type="HOGENOM" id="CLU_002472_4_0_6"/>
<dbReference type="Proteomes" id="UP000008322">
    <property type="component" value="Chromosome"/>
</dbReference>
<dbReference type="GO" id="GO:0005829">
    <property type="term" value="C:cytosol"/>
    <property type="evidence" value="ECO:0007669"/>
    <property type="project" value="TreeGrafter"/>
</dbReference>
<dbReference type="GO" id="GO:0005524">
    <property type="term" value="F:ATP binding"/>
    <property type="evidence" value="ECO:0007669"/>
    <property type="project" value="UniProtKB-UniRule"/>
</dbReference>
<dbReference type="GO" id="GO:0140664">
    <property type="term" value="F:ATP-dependent DNA damage sensor activity"/>
    <property type="evidence" value="ECO:0007669"/>
    <property type="project" value="InterPro"/>
</dbReference>
<dbReference type="GO" id="GO:0003684">
    <property type="term" value="F:damaged DNA binding"/>
    <property type="evidence" value="ECO:0007669"/>
    <property type="project" value="UniProtKB-UniRule"/>
</dbReference>
<dbReference type="GO" id="GO:0030983">
    <property type="term" value="F:mismatched DNA binding"/>
    <property type="evidence" value="ECO:0007669"/>
    <property type="project" value="InterPro"/>
</dbReference>
<dbReference type="GO" id="GO:0006298">
    <property type="term" value="P:mismatch repair"/>
    <property type="evidence" value="ECO:0007669"/>
    <property type="project" value="UniProtKB-UniRule"/>
</dbReference>
<dbReference type="CDD" id="cd03284">
    <property type="entry name" value="ABC_MutS1"/>
    <property type="match status" value="1"/>
</dbReference>
<dbReference type="FunFam" id="1.10.1420.10:FF:000002">
    <property type="entry name" value="DNA mismatch repair protein MutS"/>
    <property type="match status" value="1"/>
</dbReference>
<dbReference type="FunFam" id="3.30.420.110:FF:000001">
    <property type="entry name" value="DNA mismatch repair protein MutS"/>
    <property type="match status" value="1"/>
</dbReference>
<dbReference type="FunFam" id="3.40.1170.10:FF:000001">
    <property type="entry name" value="DNA mismatch repair protein MutS"/>
    <property type="match status" value="1"/>
</dbReference>
<dbReference type="FunFam" id="3.40.50.300:FF:000283">
    <property type="entry name" value="DNA mismatch repair protein MutS"/>
    <property type="match status" value="1"/>
</dbReference>
<dbReference type="Gene3D" id="1.10.1420.10">
    <property type="match status" value="2"/>
</dbReference>
<dbReference type="Gene3D" id="6.10.140.430">
    <property type="match status" value="1"/>
</dbReference>
<dbReference type="Gene3D" id="3.40.1170.10">
    <property type="entry name" value="DNA repair protein MutS, domain I"/>
    <property type="match status" value="1"/>
</dbReference>
<dbReference type="Gene3D" id="3.30.420.110">
    <property type="entry name" value="MutS, connector domain"/>
    <property type="match status" value="1"/>
</dbReference>
<dbReference type="Gene3D" id="3.40.50.300">
    <property type="entry name" value="P-loop containing nucleotide triphosphate hydrolases"/>
    <property type="match status" value="1"/>
</dbReference>
<dbReference type="HAMAP" id="MF_00096">
    <property type="entry name" value="MutS"/>
    <property type="match status" value="1"/>
</dbReference>
<dbReference type="InterPro" id="IPR005748">
    <property type="entry name" value="DNA_mismatch_repair_MutS"/>
</dbReference>
<dbReference type="InterPro" id="IPR007695">
    <property type="entry name" value="DNA_mismatch_repair_MutS-lik_N"/>
</dbReference>
<dbReference type="InterPro" id="IPR017261">
    <property type="entry name" value="DNA_mismatch_repair_MutS/MSH"/>
</dbReference>
<dbReference type="InterPro" id="IPR000432">
    <property type="entry name" value="DNA_mismatch_repair_MutS_C"/>
</dbReference>
<dbReference type="InterPro" id="IPR007861">
    <property type="entry name" value="DNA_mismatch_repair_MutS_clamp"/>
</dbReference>
<dbReference type="InterPro" id="IPR007696">
    <property type="entry name" value="DNA_mismatch_repair_MutS_core"/>
</dbReference>
<dbReference type="InterPro" id="IPR016151">
    <property type="entry name" value="DNA_mismatch_repair_MutS_N"/>
</dbReference>
<dbReference type="InterPro" id="IPR036187">
    <property type="entry name" value="DNA_mismatch_repair_MutS_sf"/>
</dbReference>
<dbReference type="InterPro" id="IPR007860">
    <property type="entry name" value="DNA_mmatch_repair_MutS_con_dom"/>
</dbReference>
<dbReference type="InterPro" id="IPR045076">
    <property type="entry name" value="MutS"/>
</dbReference>
<dbReference type="InterPro" id="IPR036678">
    <property type="entry name" value="MutS_con_dom_sf"/>
</dbReference>
<dbReference type="InterPro" id="IPR027417">
    <property type="entry name" value="P-loop_NTPase"/>
</dbReference>
<dbReference type="NCBIfam" id="TIGR01070">
    <property type="entry name" value="mutS1"/>
    <property type="match status" value="1"/>
</dbReference>
<dbReference type="NCBIfam" id="NF003810">
    <property type="entry name" value="PRK05399.1"/>
    <property type="match status" value="1"/>
</dbReference>
<dbReference type="PANTHER" id="PTHR11361:SF34">
    <property type="entry name" value="DNA MISMATCH REPAIR PROTEIN MSH1, MITOCHONDRIAL"/>
    <property type="match status" value="1"/>
</dbReference>
<dbReference type="PANTHER" id="PTHR11361">
    <property type="entry name" value="DNA MISMATCH REPAIR PROTEIN MUTS FAMILY MEMBER"/>
    <property type="match status" value="1"/>
</dbReference>
<dbReference type="Pfam" id="PF01624">
    <property type="entry name" value="MutS_I"/>
    <property type="match status" value="1"/>
</dbReference>
<dbReference type="Pfam" id="PF05188">
    <property type="entry name" value="MutS_II"/>
    <property type="match status" value="1"/>
</dbReference>
<dbReference type="Pfam" id="PF05192">
    <property type="entry name" value="MutS_III"/>
    <property type="match status" value="1"/>
</dbReference>
<dbReference type="Pfam" id="PF05190">
    <property type="entry name" value="MutS_IV"/>
    <property type="match status" value="1"/>
</dbReference>
<dbReference type="Pfam" id="PF00488">
    <property type="entry name" value="MutS_V"/>
    <property type="match status" value="1"/>
</dbReference>
<dbReference type="PIRSF" id="PIRSF037677">
    <property type="entry name" value="DNA_mis_repair_Msh6"/>
    <property type="match status" value="1"/>
</dbReference>
<dbReference type="SMART" id="SM00534">
    <property type="entry name" value="MUTSac"/>
    <property type="match status" value="1"/>
</dbReference>
<dbReference type="SMART" id="SM00533">
    <property type="entry name" value="MUTSd"/>
    <property type="match status" value="1"/>
</dbReference>
<dbReference type="SUPFAM" id="SSF55271">
    <property type="entry name" value="DNA repair protein MutS, domain I"/>
    <property type="match status" value="1"/>
</dbReference>
<dbReference type="SUPFAM" id="SSF53150">
    <property type="entry name" value="DNA repair protein MutS, domain II"/>
    <property type="match status" value="1"/>
</dbReference>
<dbReference type="SUPFAM" id="SSF48334">
    <property type="entry name" value="DNA repair protein MutS, domain III"/>
    <property type="match status" value="1"/>
</dbReference>
<dbReference type="SUPFAM" id="SSF52540">
    <property type="entry name" value="P-loop containing nucleoside triphosphate hydrolases"/>
    <property type="match status" value="1"/>
</dbReference>
<dbReference type="PROSITE" id="PS00486">
    <property type="entry name" value="DNA_MISMATCH_REPAIR_2"/>
    <property type="match status" value="1"/>
</dbReference>
<proteinExistence type="inferred from homology"/>
<accession>B5FTQ5</accession>
<sequence length="855" mass="95324">MNESFDKDFSNHTPMMQQYLKLKAQHPEILLFYRMGDFYELFYDDAKRASQLLDISLTKRGASAGEPIPMAGIPHHAVENYLAKLVNQGESVAICEQIGDPATSKGPVERKVVRIVTPGTISDEALLQERQDNLLAAIWQDGKGYGYATLDISSGRFRLSEPADRETMAAELQRTNPAELLYAEDFAEMALIEGRRGLRRRPLWEFEIDTARQQLNLQFGTRDLVGFGVENASRGLCAAGCLLQYVKDTQRTSLPHIRSITMERQQDSIIMDAATRRNLEITQNLAGGVENTLAAVLDCTVTPMGSRMLKRWLHMPVRNTDILRERQQTIGALQDTVSELQPVLRQVGDLERILARLALRTARPRDLARMRHAFQQLPELHAQLETVDSAPVQALRKKMGDFAELRDLLERAIIDAPPVLVRDGGVIAPGYHEELDEWRALADGATDYLDCLEIRERERTGLDTLKVGYNAVHGYYIQISRGQSHLAPINYVRRQTLKNAERYIIPELKEYEDKVLTSKGKALALEKQLYDELFDLLLPHLADLQQSANALAELDVLVNLAERAWTLNYTCPTFTDKPGIRITEGRHPVVEQVLNEPFIANPLNLSPQRRMLIITGPNMGGKSTYMRQTALIALLAYIGSYVPAQNVEIGPIDRIFTRVGAADDLASGRSTFMVEMTETANILHNATENSLVLMDEIGRGTSTYDGLSLAWACAENLANKIKALTLFATHYFELTQLPEKMEGVANVHLDALEHGDTIAFMHSVQDGAASKSYGLAVAALAGVPKEVIKRARQKLRELESISPNAAATQVDGTQMSLLAAPEEASPAVEALENLDPDSLTPRQALEWIYRLKSLV</sequence>
<keyword id="KW-0067">ATP-binding</keyword>
<keyword id="KW-0227">DNA damage</keyword>
<keyword id="KW-0234">DNA repair</keyword>
<keyword id="KW-0238">DNA-binding</keyword>
<keyword id="KW-0547">Nucleotide-binding</keyword>
<comment type="function">
    <text evidence="1">This protein is involved in the repair of mismatches in DNA. It is possible that it carries out the mismatch recognition step. This protein has a weak ATPase activity.</text>
</comment>
<comment type="similarity">
    <text evidence="1">Belongs to the DNA mismatch repair MutS family.</text>
</comment>
<reference key="1">
    <citation type="journal article" date="2011" name="J. Bacteriol.">
        <title>Comparative genomics of 28 Salmonella enterica isolates: evidence for CRISPR-mediated adaptive sublineage evolution.</title>
        <authorList>
            <person name="Fricke W.F."/>
            <person name="Mammel M.K."/>
            <person name="McDermott P.F."/>
            <person name="Tartera C."/>
            <person name="White D.G."/>
            <person name="Leclerc J.E."/>
            <person name="Ravel J."/>
            <person name="Cebula T.A."/>
        </authorList>
    </citation>
    <scope>NUCLEOTIDE SEQUENCE [LARGE SCALE GENOMIC DNA]</scope>
    <source>
        <strain>CT_02021853</strain>
    </source>
</reference>
<evidence type="ECO:0000255" key="1">
    <source>
        <dbReference type="HAMAP-Rule" id="MF_00096"/>
    </source>
</evidence>
<gene>
    <name evidence="1" type="primary">mutS</name>
    <name type="ordered locus">SeD_A3218</name>
</gene>
<feature type="chain" id="PRO_1000093641" description="DNA mismatch repair protein MutS">
    <location>
        <begin position="1"/>
        <end position="855"/>
    </location>
</feature>
<feature type="binding site" evidence="1">
    <location>
        <begin position="616"/>
        <end position="623"/>
    </location>
    <ligand>
        <name>ATP</name>
        <dbReference type="ChEBI" id="CHEBI:30616"/>
    </ligand>
</feature>
<name>MUTS_SALDC</name>
<organism>
    <name type="scientific">Salmonella dublin (strain CT_02021853)</name>
    <dbReference type="NCBI Taxonomy" id="439851"/>
    <lineage>
        <taxon>Bacteria</taxon>
        <taxon>Pseudomonadati</taxon>
        <taxon>Pseudomonadota</taxon>
        <taxon>Gammaproteobacteria</taxon>
        <taxon>Enterobacterales</taxon>
        <taxon>Enterobacteriaceae</taxon>
        <taxon>Salmonella</taxon>
    </lineage>
</organism>
<protein>
    <recommendedName>
        <fullName evidence="1">DNA mismatch repair protein MutS</fullName>
    </recommendedName>
</protein>